<comment type="function">
    <text evidence="1">Acts as a protein-folding catalyst that interacts with nascent polypeptides to catalyze the formation, isomerization, and reduction or oxidation of disulfide bonds. May play a role in storage protein biogenesis (By similarity).</text>
</comment>
<comment type="catalytic activity">
    <reaction>
        <text>Catalyzes the rearrangement of -S-S- bonds in proteins.</text>
        <dbReference type="EC" id="5.3.4.1"/>
    </reaction>
</comment>
<comment type="subcellular location">
    <subcellularLocation>
        <location evidence="5">Secreted</location>
    </subcellularLocation>
</comment>
<comment type="alternative products">
    <event type="alternative splicing"/>
    <isoform>
        <id>Q75M08-1</id>
        <name>1</name>
        <sequence type="displayed"/>
    </isoform>
    <isoform>
        <id>Q75M08-2</id>
        <name>2</name>
        <sequence type="described" ref="VSP_039981"/>
    </isoform>
</comment>
<comment type="similarity">
    <text evidence="5">Belongs to the protein disulfide isomerase family.</text>
</comment>
<organism>
    <name type="scientific">Oryza sativa subsp. japonica</name>
    <name type="common">Rice</name>
    <dbReference type="NCBI Taxonomy" id="39947"/>
    <lineage>
        <taxon>Eukaryota</taxon>
        <taxon>Viridiplantae</taxon>
        <taxon>Streptophyta</taxon>
        <taxon>Embryophyta</taxon>
        <taxon>Tracheophyta</taxon>
        <taxon>Spermatophyta</taxon>
        <taxon>Magnoliopsida</taxon>
        <taxon>Liliopsida</taxon>
        <taxon>Poales</taxon>
        <taxon>Poaceae</taxon>
        <taxon>BOP clade</taxon>
        <taxon>Oryzoideae</taxon>
        <taxon>Oryzeae</taxon>
        <taxon>Oryzinae</taxon>
        <taxon>Oryza</taxon>
        <taxon>Oryza sativa</taxon>
    </lineage>
</organism>
<sequence length="366" mass="39913">MATPQISRKALASLLLLVAAAAAVSTASADDVLALTESTFEKEVGQDRAALVEFYAPWCGHCKKLAPEYEKLGASFKKAKSVLIAKVDCDEHKSVCSKYGVSGYPTIQWFPKGSLEPKKYEGQRTAEALAEYVNSEAATNVKIAAVPSSVVVLTPETFDSVVLDETKDVLVEFYAPWCGHCKHLAPIYEKLASVYKQDEGVVIANLDADKHTALAEKYGVSGFPTLKFFPKGNKAGEDYDGGRELDDFVKFINEKCGTSRDSKGQLTSEAGIVESLAPLVKEFLGAANDKRKEALSKMEEDVAKLTGPAAKYGKIYVNSAKKIMEKGSEYTKKESERLQRMLEKSISPSKADEFVIKKNILSTFSS</sequence>
<feature type="signal peptide" evidence="2">
    <location>
        <begin position="1"/>
        <end position="29"/>
    </location>
</feature>
<feature type="chain" id="PRO_0000400033" description="Protein disulfide isomerase-like 2-1">
    <location>
        <begin position="30"/>
        <end position="366"/>
    </location>
</feature>
<feature type="domain" description="Thioredoxin 1" evidence="3">
    <location>
        <begin position="30"/>
        <end position="138"/>
    </location>
</feature>
<feature type="domain" description="Thioredoxin 2" evidence="3">
    <location>
        <begin position="139"/>
        <end position="257"/>
    </location>
</feature>
<feature type="active site" description="Nucleophile" evidence="1">
    <location>
        <position position="59"/>
    </location>
</feature>
<feature type="active site" description="Nucleophile" evidence="1">
    <location>
        <position position="62"/>
    </location>
</feature>
<feature type="active site" description="Nucleophile" evidence="1">
    <location>
        <position position="178"/>
    </location>
</feature>
<feature type="active site" description="Nucleophile" evidence="1">
    <location>
        <position position="181"/>
    </location>
</feature>
<feature type="site" description="Contributes to redox potential value" evidence="1">
    <location>
        <position position="60"/>
    </location>
</feature>
<feature type="site" description="Contributes to redox potential value" evidence="1">
    <location>
        <position position="61"/>
    </location>
</feature>
<feature type="site" description="Lowers pKa of C-terminal Cys of first active site" evidence="1">
    <location>
        <position position="124"/>
    </location>
</feature>
<feature type="site" description="Contributes to redox potential value" evidence="1">
    <location>
        <position position="179"/>
    </location>
</feature>
<feature type="site" description="Contributes to redox potential value" evidence="1">
    <location>
        <position position="180"/>
    </location>
</feature>
<feature type="site" description="Lowers pKa of C-terminal Cys of second active site" evidence="1">
    <location>
        <position position="243"/>
    </location>
</feature>
<feature type="disulfide bond" description="Redox-active" evidence="3">
    <location>
        <begin position="59"/>
        <end position="62"/>
    </location>
</feature>
<feature type="disulfide bond" description="Redox-active" evidence="3">
    <location>
        <begin position="178"/>
        <end position="181"/>
    </location>
</feature>
<feature type="splice variant" id="VSP_039981" description="In isoform 2." evidence="4">
    <original>K</original>
    <variation>NR</variation>
    <location>
        <position position="311"/>
    </location>
</feature>
<gene>
    <name type="primary">PDIL2-1</name>
    <name type="synonym">PDIL4-1</name>
    <name type="ordered locus">Os05g0156300</name>
    <name type="ordered locus">LOC_Os05g06430</name>
    <name type="ORF">OsJ_17181</name>
    <name type="ORF">P0431G05.14</name>
    <name type="ORF">P0676G05.4</name>
</gene>
<accession>Q75M08</accession>
<accession>A0A0P0WI54</accession>
<accession>B7ENX8</accession>
<accession>Q5WMX4</accession>
<protein>
    <recommendedName>
        <fullName>Protein disulfide isomerase-like 2-1</fullName>
        <shortName>OsPDIL2-1</shortName>
        <ecNumber>5.3.4.1</ecNumber>
    </recommendedName>
    <alternativeName>
        <fullName>Protein disulfide isomerase-like 4-1</fullName>
        <shortName>OsPDIL4-1</shortName>
    </alternativeName>
</protein>
<keyword id="KW-0025">Alternative splicing</keyword>
<keyword id="KW-1015">Disulfide bond</keyword>
<keyword id="KW-0413">Isomerase</keyword>
<keyword id="KW-0676">Redox-active center</keyword>
<keyword id="KW-1185">Reference proteome</keyword>
<keyword id="KW-0677">Repeat</keyword>
<keyword id="KW-0964">Secreted</keyword>
<keyword id="KW-0732">Signal</keyword>
<dbReference type="EC" id="5.3.4.1"/>
<dbReference type="EMBL" id="AC087425">
    <property type="protein sequence ID" value="AAS55771.2"/>
    <property type="molecule type" value="Genomic_DNA"/>
</dbReference>
<dbReference type="EMBL" id="AC087551">
    <property type="protein sequence ID" value="AAV32227.1"/>
    <property type="molecule type" value="Genomic_DNA"/>
</dbReference>
<dbReference type="EMBL" id="AP008211">
    <property type="protein sequence ID" value="BAF16610.1"/>
    <property type="molecule type" value="Genomic_DNA"/>
</dbReference>
<dbReference type="EMBL" id="AP014961">
    <property type="protein sequence ID" value="BAS92362.1"/>
    <property type="molecule type" value="Genomic_DNA"/>
</dbReference>
<dbReference type="EMBL" id="AP014961">
    <property type="protein sequence ID" value="BAS92363.1"/>
    <property type="molecule type" value="Genomic_DNA"/>
</dbReference>
<dbReference type="EMBL" id="CM000142">
    <property type="protein sequence ID" value="EEE62391.1"/>
    <property type="molecule type" value="Genomic_DNA"/>
</dbReference>
<dbReference type="EMBL" id="AK062024">
    <property type="protein sequence ID" value="BAG88199.1"/>
    <property type="molecule type" value="mRNA"/>
</dbReference>
<dbReference type="EMBL" id="AK098931">
    <property type="protein sequence ID" value="BAG93817.1"/>
    <property type="molecule type" value="mRNA"/>
</dbReference>
<dbReference type="EMBL" id="AK099341">
    <property type="protein sequence ID" value="BAG94075.1"/>
    <property type="molecule type" value="mRNA"/>
</dbReference>
<dbReference type="EMBL" id="AK103944">
    <property type="protein sequence ID" value="BAG96336.1"/>
    <property type="molecule type" value="mRNA"/>
</dbReference>
<dbReference type="RefSeq" id="XP_015640374.1">
    <property type="nucleotide sequence ID" value="XM_015784888.1"/>
</dbReference>
<dbReference type="RefSeq" id="XP_015640375.1">
    <property type="nucleotide sequence ID" value="XM_015784889.1"/>
</dbReference>
<dbReference type="SMR" id="Q75M08"/>
<dbReference type="FunCoup" id="Q75M08">
    <property type="interactions" value="1474"/>
</dbReference>
<dbReference type="STRING" id="39947.Q75M08"/>
<dbReference type="PaxDb" id="39947-Q75M08"/>
<dbReference type="EnsemblPlants" id="Os05t0156300-02">
    <molecule id="Q75M08-1"/>
    <property type="protein sequence ID" value="Os05t0156300-02"/>
    <property type="gene ID" value="Os05g0156300"/>
</dbReference>
<dbReference type="EnsemblPlants" id="Os05t0156300-03">
    <molecule id="Q75M08-1"/>
    <property type="protein sequence ID" value="Os05t0156300-03"/>
    <property type="gene ID" value="Os05g0156300"/>
</dbReference>
<dbReference type="Gramene" id="Os05t0156300-02">
    <molecule id="Q75M08-1"/>
    <property type="protein sequence ID" value="Os05t0156300-02"/>
    <property type="gene ID" value="Os05g0156300"/>
</dbReference>
<dbReference type="Gramene" id="Os05t0156300-03">
    <molecule id="Q75M08-1"/>
    <property type="protein sequence ID" value="Os05t0156300-03"/>
    <property type="gene ID" value="Os05g0156300"/>
</dbReference>
<dbReference type="KEGG" id="dosa:Os05g0156300"/>
<dbReference type="eggNOG" id="KOG0191">
    <property type="taxonomic scope" value="Eukaryota"/>
</dbReference>
<dbReference type="HOGENOM" id="CLU_038617_1_0_1"/>
<dbReference type="InParanoid" id="Q75M08"/>
<dbReference type="OMA" id="WTELAKG"/>
<dbReference type="OrthoDB" id="10264505at2759"/>
<dbReference type="Proteomes" id="UP000000763">
    <property type="component" value="Chromosome 5"/>
</dbReference>
<dbReference type="Proteomes" id="UP000007752">
    <property type="component" value="Chromosome 5"/>
</dbReference>
<dbReference type="Proteomes" id="UP000059680">
    <property type="component" value="Chromosome 5"/>
</dbReference>
<dbReference type="ExpressionAtlas" id="Q75M08">
    <property type="expression patterns" value="baseline and differential"/>
</dbReference>
<dbReference type="GO" id="GO:0005783">
    <property type="term" value="C:endoplasmic reticulum"/>
    <property type="evidence" value="ECO:0000318"/>
    <property type="project" value="GO_Central"/>
</dbReference>
<dbReference type="GO" id="GO:0005576">
    <property type="term" value="C:extracellular region"/>
    <property type="evidence" value="ECO:0007669"/>
    <property type="project" value="UniProtKB-SubCell"/>
</dbReference>
<dbReference type="GO" id="GO:0003756">
    <property type="term" value="F:protein disulfide isomerase activity"/>
    <property type="evidence" value="ECO:0000318"/>
    <property type="project" value="GO_Central"/>
</dbReference>
<dbReference type="GO" id="GO:0006457">
    <property type="term" value="P:protein folding"/>
    <property type="evidence" value="ECO:0000318"/>
    <property type="project" value="GO_Central"/>
</dbReference>
<dbReference type="CDD" id="cd00238">
    <property type="entry name" value="ERp29c"/>
    <property type="match status" value="1"/>
</dbReference>
<dbReference type="CDD" id="cd02998">
    <property type="entry name" value="PDI_a_ERp38"/>
    <property type="match status" value="2"/>
</dbReference>
<dbReference type="FunFam" id="3.40.30.10:FF:000032">
    <property type="entry name" value="Protein disulfide-isomerase A6 homolog"/>
    <property type="match status" value="2"/>
</dbReference>
<dbReference type="Gene3D" id="1.20.1150.12">
    <property type="entry name" value="Endoplasmic reticulum resident protein 29, C-terminal domain"/>
    <property type="match status" value="1"/>
</dbReference>
<dbReference type="Gene3D" id="3.40.30.10">
    <property type="entry name" value="Glutaredoxin"/>
    <property type="match status" value="2"/>
</dbReference>
<dbReference type="InterPro" id="IPR011679">
    <property type="entry name" value="ERp29_C"/>
</dbReference>
<dbReference type="InterPro" id="IPR036356">
    <property type="entry name" value="ERp29_C_sf"/>
</dbReference>
<dbReference type="InterPro" id="IPR051063">
    <property type="entry name" value="PDI"/>
</dbReference>
<dbReference type="InterPro" id="IPR005788">
    <property type="entry name" value="PDI_thioredoxin-like_dom"/>
</dbReference>
<dbReference type="InterPro" id="IPR036249">
    <property type="entry name" value="Thioredoxin-like_sf"/>
</dbReference>
<dbReference type="InterPro" id="IPR017937">
    <property type="entry name" value="Thioredoxin_CS"/>
</dbReference>
<dbReference type="InterPro" id="IPR013766">
    <property type="entry name" value="Thioredoxin_domain"/>
</dbReference>
<dbReference type="NCBIfam" id="TIGR01126">
    <property type="entry name" value="pdi_dom"/>
    <property type="match status" value="2"/>
</dbReference>
<dbReference type="PANTHER" id="PTHR45672:SF11">
    <property type="entry name" value="PROTEIN DISULFIDE-ISOMERASE C17H9.14C"/>
    <property type="match status" value="1"/>
</dbReference>
<dbReference type="PANTHER" id="PTHR45672">
    <property type="entry name" value="PROTEIN DISULFIDE-ISOMERASE C17H9.14C-RELATED"/>
    <property type="match status" value="1"/>
</dbReference>
<dbReference type="Pfam" id="PF07749">
    <property type="entry name" value="ERp29"/>
    <property type="match status" value="1"/>
</dbReference>
<dbReference type="Pfam" id="PF00085">
    <property type="entry name" value="Thioredoxin"/>
    <property type="match status" value="2"/>
</dbReference>
<dbReference type="PRINTS" id="PR00421">
    <property type="entry name" value="THIOREDOXIN"/>
</dbReference>
<dbReference type="SUPFAM" id="SSF47933">
    <property type="entry name" value="ERP29 C domain-like"/>
    <property type="match status" value="1"/>
</dbReference>
<dbReference type="SUPFAM" id="SSF52833">
    <property type="entry name" value="Thioredoxin-like"/>
    <property type="match status" value="2"/>
</dbReference>
<dbReference type="PROSITE" id="PS00194">
    <property type="entry name" value="THIOREDOXIN_1"/>
    <property type="match status" value="2"/>
</dbReference>
<dbReference type="PROSITE" id="PS51352">
    <property type="entry name" value="THIOREDOXIN_2"/>
    <property type="match status" value="2"/>
</dbReference>
<proteinExistence type="evidence at transcript level"/>
<reference key="1">
    <citation type="journal article" date="2005" name="Mol. Genet. Genomics">
        <title>A fine physical map of the rice chromosome 5.</title>
        <authorList>
            <person name="Cheng C.-H."/>
            <person name="Chung M.C."/>
            <person name="Liu S.-M."/>
            <person name="Chen S.-K."/>
            <person name="Kao F.Y."/>
            <person name="Lin S.-J."/>
            <person name="Hsiao S.-H."/>
            <person name="Tseng I.C."/>
            <person name="Hsing Y.-I.C."/>
            <person name="Wu H.-P."/>
            <person name="Chen C.-S."/>
            <person name="Shaw J.-F."/>
            <person name="Wu J."/>
            <person name="Matsumoto T."/>
            <person name="Sasaki T."/>
            <person name="Chen H.-C."/>
            <person name="Chow T.-Y."/>
        </authorList>
    </citation>
    <scope>NUCLEOTIDE SEQUENCE [LARGE SCALE GENOMIC DNA]</scope>
    <source>
        <strain>cv. Nipponbare</strain>
    </source>
</reference>
<reference key="2">
    <citation type="journal article" date="2005" name="Nature">
        <title>The map-based sequence of the rice genome.</title>
        <authorList>
            <consortium name="International rice genome sequencing project (IRGSP)"/>
        </authorList>
    </citation>
    <scope>NUCLEOTIDE SEQUENCE [LARGE SCALE GENOMIC DNA]</scope>
    <source>
        <strain>cv. Nipponbare</strain>
    </source>
</reference>
<reference key="3">
    <citation type="journal article" date="2008" name="Nucleic Acids Res.">
        <title>The rice annotation project database (RAP-DB): 2008 update.</title>
        <authorList>
            <consortium name="The rice annotation project (RAP)"/>
        </authorList>
    </citation>
    <scope>GENOME REANNOTATION</scope>
    <source>
        <strain>cv. Nipponbare</strain>
    </source>
</reference>
<reference key="4">
    <citation type="journal article" date="2013" name="Rice">
        <title>Improvement of the Oryza sativa Nipponbare reference genome using next generation sequence and optical map data.</title>
        <authorList>
            <person name="Kawahara Y."/>
            <person name="de la Bastide M."/>
            <person name="Hamilton J.P."/>
            <person name="Kanamori H."/>
            <person name="McCombie W.R."/>
            <person name="Ouyang S."/>
            <person name="Schwartz D.C."/>
            <person name="Tanaka T."/>
            <person name="Wu J."/>
            <person name="Zhou S."/>
            <person name="Childs K.L."/>
            <person name="Davidson R.M."/>
            <person name="Lin H."/>
            <person name="Quesada-Ocampo L."/>
            <person name="Vaillancourt B."/>
            <person name="Sakai H."/>
            <person name="Lee S.S."/>
            <person name="Kim J."/>
            <person name="Numa H."/>
            <person name="Itoh T."/>
            <person name="Buell C.R."/>
            <person name="Matsumoto T."/>
        </authorList>
    </citation>
    <scope>GENOME REANNOTATION</scope>
    <source>
        <strain>cv. Nipponbare</strain>
    </source>
</reference>
<reference key="5">
    <citation type="journal article" date="2005" name="PLoS Biol.">
        <title>The genomes of Oryza sativa: a history of duplications.</title>
        <authorList>
            <person name="Yu J."/>
            <person name="Wang J."/>
            <person name="Lin W."/>
            <person name="Li S."/>
            <person name="Li H."/>
            <person name="Zhou J."/>
            <person name="Ni P."/>
            <person name="Dong W."/>
            <person name="Hu S."/>
            <person name="Zeng C."/>
            <person name="Zhang J."/>
            <person name="Zhang Y."/>
            <person name="Li R."/>
            <person name="Xu Z."/>
            <person name="Li S."/>
            <person name="Li X."/>
            <person name="Zheng H."/>
            <person name="Cong L."/>
            <person name="Lin L."/>
            <person name="Yin J."/>
            <person name="Geng J."/>
            <person name="Li G."/>
            <person name="Shi J."/>
            <person name="Liu J."/>
            <person name="Lv H."/>
            <person name="Li J."/>
            <person name="Wang J."/>
            <person name="Deng Y."/>
            <person name="Ran L."/>
            <person name="Shi X."/>
            <person name="Wang X."/>
            <person name="Wu Q."/>
            <person name="Li C."/>
            <person name="Ren X."/>
            <person name="Wang J."/>
            <person name="Wang X."/>
            <person name="Li D."/>
            <person name="Liu D."/>
            <person name="Zhang X."/>
            <person name="Ji Z."/>
            <person name="Zhao W."/>
            <person name="Sun Y."/>
            <person name="Zhang Z."/>
            <person name="Bao J."/>
            <person name="Han Y."/>
            <person name="Dong L."/>
            <person name="Ji J."/>
            <person name="Chen P."/>
            <person name="Wu S."/>
            <person name="Liu J."/>
            <person name="Xiao Y."/>
            <person name="Bu D."/>
            <person name="Tan J."/>
            <person name="Yang L."/>
            <person name="Ye C."/>
            <person name="Zhang J."/>
            <person name="Xu J."/>
            <person name="Zhou Y."/>
            <person name="Yu Y."/>
            <person name="Zhang B."/>
            <person name="Zhuang S."/>
            <person name="Wei H."/>
            <person name="Liu B."/>
            <person name="Lei M."/>
            <person name="Yu H."/>
            <person name="Li Y."/>
            <person name="Xu H."/>
            <person name="Wei S."/>
            <person name="He X."/>
            <person name="Fang L."/>
            <person name="Zhang Z."/>
            <person name="Zhang Y."/>
            <person name="Huang X."/>
            <person name="Su Z."/>
            <person name="Tong W."/>
            <person name="Li J."/>
            <person name="Tong Z."/>
            <person name="Li S."/>
            <person name="Ye J."/>
            <person name="Wang L."/>
            <person name="Fang L."/>
            <person name="Lei T."/>
            <person name="Chen C.-S."/>
            <person name="Chen H.-C."/>
            <person name="Xu Z."/>
            <person name="Li H."/>
            <person name="Huang H."/>
            <person name="Zhang F."/>
            <person name="Xu H."/>
            <person name="Li N."/>
            <person name="Zhao C."/>
            <person name="Li S."/>
            <person name="Dong L."/>
            <person name="Huang Y."/>
            <person name="Li L."/>
            <person name="Xi Y."/>
            <person name="Qi Q."/>
            <person name="Li W."/>
            <person name="Zhang B."/>
            <person name="Hu W."/>
            <person name="Zhang Y."/>
            <person name="Tian X."/>
            <person name="Jiao Y."/>
            <person name="Liang X."/>
            <person name="Jin J."/>
            <person name="Gao L."/>
            <person name="Zheng W."/>
            <person name="Hao B."/>
            <person name="Liu S.-M."/>
            <person name="Wang W."/>
            <person name="Yuan L."/>
            <person name="Cao M."/>
            <person name="McDermott J."/>
            <person name="Samudrala R."/>
            <person name="Wang J."/>
            <person name="Wong G.K.-S."/>
            <person name="Yang H."/>
        </authorList>
    </citation>
    <scope>NUCLEOTIDE SEQUENCE [LARGE SCALE GENOMIC DNA]</scope>
    <source>
        <strain>cv. Nipponbare</strain>
    </source>
</reference>
<reference key="6">
    <citation type="journal article" date="2003" name="Science">
        <title>Collection, mapping, and annotation of over 28,000 cDNA clones from japonica rice.</title>
        <authorList>
            <consortium name="The rice full-length cDNA consortium"/>
        </authorList>
    </citation>
    <scope>NUCLEOTIDE SEQUENCE [LARGE SCALE MRNA] (ISOFORMS 1 AND 2)</scope>
    <source>
        <strain>cv. Nipponbare</strain>
    </source>
</reference>
<reference key="7">
    <citation type="journal article" date="2005" name="Plant Physiol.">
        <title>Phylogenetic analyses identify 10 classes of the protein disulfide isomerase family in plants, including single-domain protein disulfide isomerase-related proteins.</title>
        <authorList>
            <person name="Houston N.L."/>
            <person name="Fan C."/>
            <person name="Xiang J.Q."/>
            <person name="Schulze J.M."/>
            <person name="Jung R."/>
            <person name="Boston R.S."/>
        </authorList>
    </citation>
    <scope>GENE FAMILY</scope>
    <scope>NOMENCLATURE</scope>
</reference>
<reference key="8">
    <citation type="journal article" date="2010" name="BMC Plant Biol.">
        <title>The protein disulfide isomerase gene family in bread wheat (T. aestivum L.).</title>
        <authorList>
            <person name="d'Aloisio E."/>
            <person name="Paolacci A.R."/>
            <person name="Dhanapal A.P."/>
            <person name="Tanzarella O.A."/>
            <person name="Porceddu E."/>
            <person name="Ciaffi M."/>
        </authorList>
    </citation>
    <scope>GENE FAMILY</scope>
    <scope>NOMENCLATURE</scope>
</reference>
<evidence type="ECO:0000250" key="1"/>
<evidence type="ECO:0000255" key="2"/>
<evidence type="ECO:0000255" key="3">
    <source>
        <dbReference type="PROSITE-ProRule" id="PRU00691"/>
    </source>
</evidence>
<evidence type="ECO:0000303" key="4">
    <source>
    </source>
</evidence>
<evidence type="ECO:0000305" key="5"/>
<name>PDI21_ORYSJ</name>